<gene>
    <name type="ORF">DDB_G0293860</name>
</gene>
<dbReference type="EMBL" id="AAFI02000223">
    <property type="protein sequence ID" value="EAL60501.1"/>
    <property type="molecule type" value="Genomic_DNA"/>
</dbReference>
<dbReference type="RefSeq" id="XP_628913.1">
    <property type="nucleotide sequence ID" value="XM_628911.1"/>
</dbReference>
<dbReference type="SMR" id="Q54B75"/>
<dbReference type="FunCoup" id="Q54B75">
    <property type="interactions" value="877"/>
</dbReference>
<dbReference type="PaxDb" id="44689-DDB0192163"/>
<dbReference type="EnsemblProtists" id="EAL60501">
    <property type="protein sequence ID" value="EAL60501"/>
    <property type="gene ID" value="DDB_G0293860"/>
</dbReference>
<dbReference type="GeneID" id="8629454"/>
<dbReference type="KEGG" id="ddi:DDB_G0293860"/>
<dbReference type="dictyBase" id="DDB_G0293860"/>
<dbReference type="VEuPathDB" id="AmoebaDB:DDB_G0293860"/>
<dbReference type="eggNOG" id="ENOG502RI3K">
    <property type="taxonomic scope" value="Eukaryota"/>
</dbReference>
<dbReference type="HOGENOM" id="CLU_1032205_0_0_1"/>
<dbReference type="InParanoid" id="Q54B75"/>
<dbReference type="OMA" id="NERYNTM"/>
<dbReference type="PRO" id="PR:Q54B75"/>
<dbReference type="Proteomes" id="UP000002195">
    <property type="component" value="Chromosome 6"/>
</dbReference>
<protein>
    <recommendedName>
        <fullName>Uncharacterized protein DDB_G0293860</fullName>
    </recommendedName>
</protein>
<sequence>MTSVSSDSRKQFKGSGDHVFDFDNKENHDFLSLTIKQDNNNNNNNNTNVSLSPSIKSQATSSTGGNKNQIFSQMRELDKKSLMLIETYYRDKLITYQEKLKRELEQIYNKKLQSLKIQYDSDSYLKFKQFELETKKALLLLLKEFQDLKKSKQQQEKQLKLQQIKQESNNNNNNNNNNNNNNNNNNNNNNNNDDDQQKDIDNSNDIVNDFKTDKILKEKEEILNKLELITKSITDLFIQQVDISTDTIDFQSFLSNIVATTTTTTATISN</sequence>
<accession>Q54B75</accession>
<feature type="chain" id="PRO_0000343934" description="Uncharacterized protein DDB_G0293860">
    <location>
        <begin position="1"/>
        <end position="270"/>
    </location>
</feature>
<feature type="region of interest" description="Disordered" evidence="1">
    <location>
        <begin position="35"/>
        <end position="67"/>
    </location>
</feature>
<feature type="region of interest" description="Disordered" evidence="1">
    <location>
        <begin position="168"/>
        <end position="204"/>
    </location>
</feature>
<feature type="compositionally biased region" description="Low complexity" evidence="1">
    <location>
        <begin position="39"/>
        <end position="48"/>
    </location>
</feature>
<feature type="compositionally biased region" description="Polar residues" evidence="1">
    <location>
        <begin position="49"/>
        <end position="67"/>
    </location>
</feature>
<feature type="compositionally biased region" description="Low complexity" evidence="1">
    <location>
        <begin position="168"/>
        <end position="191"/>
    </location>
</feature>
<keyword id="KW-1185">Reference proteome</keyword>
<name>Y2163_DICDI</name>
<proteinExistence type="predicted"/>
<organism>
    <name type="scientific">Dictyostelium discoideum</name>
    <name type="common">Social amoeba</name>
    <dbReference type="NCBI Taxonomy" id="44689"/>
    <lineage>
        <taxon>Eukaryota</taxon>
        <taxon>Amoebozoa</taxon>
        <taxon>Evosea</taxon>
        <taxon>Eumycetozoa</taxon>
        <taxon>Dictyostelia</taxon>
        <taxon>Dictyosteliales</taxon>
        <taxon>Dictyosteliaceae</taxon>
        <taxon>Dictyostelium</taxon>
    </lineage>
</organism>
<evidence type="ECO:0000256" key="1">
    <source>
        <dbReference type="SAM" id="MobiDB-lite"/>
    </source>
</evidence>
<reference key="1">
    <citation type="journal article" date="2005" name="Nature">
        <title>The genome of the social amoeba Dictyostelium discoideum.</title>
        <authorList>
            <person name="Eichinger L."/>
            <person name="Pachebat J.A."/>
            <person name="Gloeckner G."/>
            <person name="Rajandream M.A."/>
            <person name="Sucgang R."/>
            <person name="Berriman M."/>
            <person name="Song J."/>
            <person name="Olsen R."/>
            <person name="Szafranski K."/>
            <person name="Xu Q."/>
            <person name="Tunggal B."/>
            <person name="Kummerfeld S."/>
            <person name="Madera M."/>
            <person name="Konfortov B.A."/>
            <person name="Rivero F."/>
            <person name="Bankier A.T."/>
            <person name="Lehmann R."/>
            <person name="Hamlin N."/>
            <person name="Davies R."/>
            <person name="Gaudet P."/>
            <person name="Fey P."/>
            <person name="Pilcher K."/>
            <person name="Chen G."/>
            <person name="Saunders D."/>
            <person name="Sodergren E.J."/>
            <person name="Davis P."/>
            <person name="Kerhornou A."/>
            <person name="Nie X."/>
            <person name="Hall N."/>
            <person name="Anjard C."/>
            <person name="Hemphill L."/>
            <person name="Bason N."/>
            <person name="Farbrother P."/>
            <person name="Desany B."/>
            <person name="Just E."/>
            <person name="Morio T."/>
            <person name="Rost R."/>
            <person name="Churcher C.M."/>
            <person name="Cooper J."/>
            <person name="Haydock S."/>
            <person name="van Driessche N."/>
            <person name="Cronin A."/>
            <person name="Goodhead I."/>
            <person name="Muzny D.M."/>
            <person name="Mourier T."/>
            <person name="Pain A."/>
            <person name="Lu M."/>
            <person name="Harper D."/>
            <person name="Lindsay R."/>
            <person name="Hauser H."/>
            <person name="James K.D."/>
            <person name="Quiles M."/>
            <person name="Madan Babu M."/>
            <person name="Saito T."/>
            <person name="Buchrieser C."/>
            <person name="Wardroper A."/>
            <person name="Felder M."/>
            <person name="Thangavelu M."/>
            <person name="Johnson D."/>
            <person name="Knights A."/>
            <person name="Loulseged H."/>
            <person name="Mungall K.L."/>
            <person name="Oliver K."/>
            <person name="Price C."/>
            <person name="Quail M.A."/>
            <person name="Urushihara H."/>
            <person name="Hernandez J."/>
            <person name="Rabbinowitsch E."/>
            <person name="Steffen D."/>
            <person name="Sanders M."/>
            <person name="Ma J."/>
            <person name="Kohara Y."/>
            <person name="Sharp S."/>
            <person name="Simmonds M.N."/>
            <person name="Spiegler S."/>
            <person name="Tivey A."/>
            <person name="Sugano S."/>
            <person name="White B."/>
            <person name="Walker D."/>
            <person name="Woodward J.R."/>
            <person name="Winckler T."/>
            <person name="Tanaka Y."/>
            <person name="Shaulsky G."/>
            <person name="Schleicher M."/>
            <person name="Weinstock G.M."/>
            <person name="Rosenthal A."/>
            <person name="Cox E.C."/>
            <person name="Chisholm R.L."/>
            <person name="Gibbs R.A."/>
            <person name="Loomis W.F."/>
            <person name="Platzer M."/>
            <person name="Kay R.R."/>
            <person name="Williams J.G."/>
            <person name="Dear P.H."/>
            <person name="Noegel A.A."/>
            <person name="Barrell B.G."/>
            <person name="Kuspa A."/>
        </authorList>
    </citation>
    <scope>NUCLEOTIDE SEQUENCE [LARGE SCALE GENOMIC DNA]</scope>
    <source>
        <strain>AX4</strain>
    </source>
</reference>